<organism>
    <name type="scientific">Oryza sativa subsp. indica</name>
    <name type="common">Rice</name>
    <dbReference type="NCBI Taxonomy" id="39946"/>
    <lineage>
        <taxon>Eukaryota</taxon>
        <taxon>Viridiplantae</taxon>
        <taxon>Streptophyta</taxon>
        <taxon>Embryophyta</taxon>
        <taxon>Tracheophyta</taxon>
        <taxon>Spermatophyta</taxon>
        <taxon>Magnoliopsida</taxon>
        <taxon>Liliopsida</taxon>
        <taxon>Poales</taxon>
        <taxon>Poaceae</taxon>
        <taxon>BOP clade</taxon>
        <taxon>Oryzoideae</taxon>
        <taxon>Oryzeae</taxon>
        <taxon>Oryzinae</taxon>
        <taxon>Oryza</taxon>
        <taxon>Oryza sativa</taxon>
    </lineage>
</organism>
<keyword id="KW-0325">Glycoprotein</keyword>
<keyword id="KW-0328">Glycosyltransferase</keyword>
<keyword id="KW-0333">Golgi apparatus</keyword>
<keyword id="KW-0472">Membrane</keyword>
<keyword id="KW-1185">Reference proteome</keyword>
<keyword id="KW-0735">Signal-anchor</keyword>
<keyword id="KW-0808">Transferase</keyword>
<keyword id="KW-0812">Transmembrane</keyword>
<keyword id="KW-1133">Transmembrane helix</keyword>
<evidence type="ECO:0000250" key="1">
    <source>
        <dbReference type="UniProtKB" id="Q7FA29"/>
    </source>
</evidence>
<evidence type="ECO:0000250" key="2">
    <source>
        <dbReference type="UniProtKB" id="Q9SGD2"/>
    </source>
</evidence>
<evidence type="ECO:0000255" key="3"/>
<evidence type="ECO:0000255" key="4">
    <source>
        <dbReference type="PROSITE-ProRule" id="PRU00498"/>
    </source>
</evidence>
<evidence type="ECO:0000305" key="5"/>
<evidence type="ECO:0000312" key="6">
    <source>
        <dbReference type="EMBL" id="CAH67271.1"/>
    </source>
</evidence>
<evidence type="ECO:0000312" key="7">
    <source>
        <dbReference type="EMBL" id="CAH67332.1"/>
    </source>
</evidence>
<evidence type="ECO:0000312" key="8">
    <source>
        <dbReference type="EMBL" id="EAY94782.1"/>
    </source>
</evidence>
<comment type="function">
    <text evidence="1">Possesses sialyltransferase-like activity in vitro. Transfers sialic acid to the glycoprotein asialofetuin. The transferred sialic acid is linked to galactose of Gal-beta-1,3-GalNAc through alpha-2,6-linkage.</text>
</comment>
<comment type="subcellular location">
    <subcellularLocation>
        <location evidence="2">Golgi apparatus membrane</location>
        <topology evidence="5">Single-pass type II membrane protein</topology>
    </subcellularLocation>
</comment>
<comment type="similarity">
    <text evidence="5">Belongs to the glycosyltransferase 29 family.</text>
</comment>
<gene>
    <name evidence="5" type="primary">STLP3</name>
    <name evidence="8" type="ORF">OsI_16563</name>
    <name evidence="6" type="ORF">OSIGBa0145C12.8</name>
    <name evidence="7" type="ORF">OSIGBa0157A06.1</name>
</gene>
<dbReference type="EC" id="2.4.99.-" evidence="5"/>
<dbReference type="EMBL" id="CR855184">
    <property type="protein sequence ID" value="CAH67271.1"/>
    <property type="molecule type" value="Genomic_DNA"/>
</dbReference>
<dbReference type="EMBL" id="CR855191">
    <property type="protein sequence ID" value="CAH67332.1"/>
    <property type="molecule type" value="Genomic_DNA"/>
</dbReference>
<dbReference type="EMBL" id="CM000129">
    <property type="protein sequence ID" value="EAY94782.1"/>
    <property type="molecule type" value="Genomic_DNA"/>
</dbReference>
<dbReference type="STRING" id="39946.A2XVC2"/>
<dbReference type="CAZy" id="GT29">
    <property type="family name" value="Glycosyltransferase Family 29"/>
</dbReference>
<dbReference type="GlyCosmos" id="A2XVC2">
    <property type="glycosylation" value="1 site, No reported glycans"/>
</dbReference>
<dbReference type="EnsemblPlants" id="BGIOSGA016731-TA">
    <property type="protein sequence ID" value="BGIOSGA016731-PA"/>
    <property type="gene ID" value="BGIOSGA016731"/>
</dbReference>
<dbReference type="EnsemblPlants" id="OsIR64_04g0018490.01">
    <property type="protein sequence ID" value="OsIR64_04g0018490.01"/>
    <property type="gene ID" value="OsIR64_04g0018490"/>
</dbReference>
<dbReference type="EnsemblPlants" id="OsKYG_04g0018810.01">
    <property type="protein sequence ID" value="OsKYG_04g0018810.01"/>
    <property type="gene ID" value="OsKYG_04g0018810"/>
</dbReference>
<dbReference type="EnsemblPlants" id="OsLaMu_04g0019480.01">
    <property type="protein sequence ID" value="OsLaMu_04g0019480.01"/>
    <property type="gene ID" value="OsLaMu_04g0019480"/>
</dbReference>
<dbReference type="EnsemblPlants" id="OsLiXu_04g0019310.01">
    <property type="protein sequence ID" value="OsLiXu_04g0019310.01"/>
    <property type="gene ID" value="OsLiXu_04g0019310"/>
</dbReference>
<dbReference type="EnsemblPlants" id="OsMH63_04G019810_01">
    <property type="protein sequence ID" value="OsMH63_04G019810_01"/>
    <property type="gene ID" value="OsMH63_04G019810"/>
</dbReference>
<dbReference type="EnsemblPlants" id="OsPr106_04g0019680.01">
    <property type="protein sequence ID" value="OsPr106_04g0019680.01"/>
    <property type="gene ID" value="OsPr106_04g0019680"/>
</dbReference>
<dbReference type="EnsemblPlants" id="OsZS97_04G019770_01">
    <property type="protein sequence ID" value="OsZS97_04G019770_01"/>
    <property type="gene ID" value="OsZS97_04G019770"/>
</dbReference>
<dbReference type="Gramene" id="BGIOSGA016731-TA">
    <property type="protein sequence ID" value="BGIOSGA016731-PA"/>
    <property type="gene ID" value="BGIOSGA016731"/>
</dbReference>
<dbReference type="Gramene" id="OsIR64_04g0018490.01">
    <property type="protein sequence ID" value="OsIR64_04g0018490.01"/>
    <property type="gene ID" value="OsIR64_04g0018490"/>
</dbReference>
<dbReference type="Gramene" id="OsKYG_04g0018810.01">
    <property type="protein sequence ID" value="OsKYG_04g0018810.01"/>
    <property type="gene ID" value="OsKYG_04g0018810"/>
</dbReference>
<dbReference type="Gramene" id="OsLaMu_04g0019480.01">
    <property type="protein sequence ID" value="OsLaMu_04g0019480.01"/>
    <property type="gene ID" value="OsLaMu_04g0019480"/>
</dbReference>
<dbReference type="Gramene" id="OsLiXu_04g0019310.01">
    <property type="protein sequence ID" value="OsLiXu_04g0019310.01"/>
    <property type="gene ID" value="OsLiXu_04g0019310"/>
</dbReference>
<dbReference type="Gramene" id="OsMH63_04G019810_01">
    <property type="protein sequence ID" value="OsMH63_04G019810_01"/>
    <property type="gene ID" value="OsMH63_04G019810"/>
</dbReference>
<dbReference type="Gramene" id="OsPr106_04g0019680.01">
    <property type="protein sequence ID" value="OsPr106_04g0019680.01"/>
    <property type="gene ID" value="OsPr106_04g0019680"/>
</dbReference>
<dbReference type="Gramene" id="OsZS97_04G019770_01">
    <property type="protein sequence ID" value="OsZS97_04G019770_01"/>
    <property type="gene ID" value="OsZS97_04G019770"/>
</dbReference>
<dbReference type="HOGENOM" id="CLU_044787_1_0_1"/>
<dbReference type="OMA" id="PIMMYMS"/>
<dbReference type="Proteomes" id="UP000007015">
    <property type="component" value="Chromosome 4"/>
</dbReference>
<dbReference type="GO" id="GO:0000139">
    <property type="term" value="C:Golgi membrane"/>
    <property type="evidence" value="ECO:0007669"/>
    <property type="project" value="UniProtKB-SubCell"/>
</dbReference>
<dbReference type="GO" id="GO:0008373">
    <property type="term" value="F:sialyltransferase activity"/>
    <property type="evidence" value="ECO:0007669"/>
    <property type="project" value="EnsemblPlants"/>
</dbReference>
<dbReference type="GO" id="GO:0006486">
    <property type="term" value="P:protein glycosylation"/>
    <property type="evidence" value="ECO:0007669"/>
    <property type="project" value="InterPro"/>
</dbReference>
<dbReference type="CDD" id="cd19952">
    <property type="entry name" value="GT29"/>
    <property type="match status" value="1"/>
</dbReference>
<dbReference type="FunFam" id="3.90.1480.20:FF:000016">
    <property type="entry name" value="Sialyltransferase-like protein 3"/>
    <property type="match status" value="1"/>
</dbReference>
<dbReference type="Gene3D" id="3.90.1480.20">
    <property type="entry name" value="Glycosyl transferase family 29"/>
    <property type="match status" value="1"/>
</dbReference>
<dbReference type="InterPro" id="IPR001675">
    <property type="entry name" value="Glyco_trans_29"/>
</dbReference>
<dbReference type="InterPro" id="IPR038578">
    <property type="entry name" value="GT29-like_sf"/>
</dbReference>
<dbReference type="PANTHER" id="PTHR46779">
    <property type="entry name" value="BETA-1,6-GALACTOSYLTRANSFERASE GALT29A"/>
    <property type="match status" value="1"/>
</dbReference>
<dbReference type="PANTHER" id="PTHR46779:SF3">
    <property type="entry name" value="SIALYLTRANSFERASE-LIKE PROTEIN 3"/>
    <property type="match status" value="1"/>
</dbReference>
<dbReference type="Pfam" id="PF00777">
    <property type="entry name" value="Glyco_transf_29"/>
    <property type="match status" value="1"/>
</dbReference>
<sequence>MKRRHWSHPSCGLLLLVAVFCLLLVFRCSQLRHSGDGAAAAAPDGGAGRNDGDDVDERLVELAAVDPAAMAVLQAAKRLLEGNLARAPERHRDVALRGLREWVGKQERFDPGVMSELVELIKRPIDRYNGDGGGGGEGEGRRYASCAVVGNSGILLAAEHGELIDGHELVVRLNNAPAGDGRYARHVGARTGLAFLNSNVLSQCAVPRRGACFCRAYGEGVPILTYMCNAAHFVEHAVCNNASSSSSGAADATAAAPVIVTDPRLDALCARIVKYYSLRRFARETGRPAEEWARRHEEGMFHYSSGMQAVVAAAGVCDRVSVFGFGKDASARHHYHTLQRRELDLHDYEAEYEFYRDLESRPEAIPFLRQRDSGFRLPPVSFYR</sequence>
<proteinExistence type="inferred from homology"/>
<accession>A2XVC2</accession>
<accession>Q01IV8</accession>
<protein>
    <recommendedName>
        <fullName evidence="5">Sialyltransferase-like protein 3</fullName>
        <ecNumber evidence="5">2.4.99.-</ecNumber>
    </recommendedName>
</protein>
<name>STLP3_ORYSI</name>
<feature type="chain" id="PRO_0000434317" description="Sialyltransferase-like protein 3">
    <location>
        <begin position="1"/>
        <end position="384"/>
    </location>
</feature>
<feature type="topological domain" description="Cytoplasmic" evidence="5">
    <location>
        <begin position="1"/>
        <end position="5"/>
    </location>
</feature>
<feature type="transmembrane region" description="Helical; Signal-anchor for type II membrane protein" evidence="3">
    <location>
        <begin position="6"/>
        <end position="26"/>
    </location>
</feature>
<feature type="topological domain" description="Lumenal" evidence="5">
    <location>
        <begin position="27"/>
        <end position="384"/>
    </location>
</feature>
<feature type="glycosylation site" description="N-linked (GlcNAc...) asparagine" evidence="4">
    <location>
        <position position="241"/>
    </location>
</feature>
<reference key="1">
    <citation type="journal article" date="2002" name="Nature">
        <title>Sequence and analysis of rice chromosome 4.</title>
        <authorList>
            <person name="Feng Q."/>
            <person name="Zhang Y."/>
            <person name="Hao P."/>
            <person name="Wang S."/>
            <person name="Fu G."/>
            <person name="Huang Y."/>
            <person name="Li Y."/>
            <person name="Zhu J."/>
            <person name="Liu Y."/>
            <person name="Hu X."/>
            <person name="Jia P."/>
            <person name="Zhang Y."/>
            <person name="Zhao Q."/>
            <person name="Ying K."/>
            <person name="Yu S."/>
            <person name="Tang Y."/>
            <person name="Weng Q."/>
            <person name="Zhang L."/>
            <person name="Lu Y."/>
            <person name="Mu J."/>
            <person name="Lu Y."/>
            <person name="Zhang L.S."/>
            <person name="Yu Z."/>
            <person name="Fan D."/>
            <person name="Liu X."/>
            <person name="Lu T."/>
            <person name="Li C."/>
            <person name="Wu Y."/>
            <person name="Sun T."/>
            <person name="Lei H."/>
            <person name="Li T."/>
            <person name="Hu H."/>
            <person name="Guan J."/>
            <person name="Wu M."/>
            <person name="Zhang R."/>
            <person name="Zhou B."/>
            <person name="Chen Z."/>
            <person name="Chen L."/>
            <person name="Jin Z."/>
            <person name="Wang R."/>
            <person name="Yin H."/>
            <person name="Cai Z."/>
            <person name="Ren S."/>
            <person name="Lv G."/>
            <person name="Gu W."/>
            <person name="Zhu G."/>
            <person name="Tu Y."/>
            <person name="Jia J."/>
            <person name="Zhang Y."/>
            <person name="Chen J."/>
            <person name="Kang H."/>
            <person name="Chen X."/>
            <person name="Shao C."/>
            <person name="Sun Y."/>
            <person name="Hu Q."/>
            <person name="Zhang X."/>
            <person name="Zhang W."/>
            <person name="Wang L."/>
            <person name="Ding C."/>
            <person name="Sheng H."/>
            <person name="Gu J."/>
            <person name="Chen S."/>
            <person name="Ni L."/>
            <person name="Zhu F."/>
            <person name="Chen W."/>
            <person name="Lan L."/>
            <person name="Lai Y."/>
            <person name="Cheng Z."/>
            <person name="Gu M."/>
            <person name="Jiang J."/>
            <person name="Li J."/>
            <person name="Hong G."/>
            <person name="Xue Y."/>
            <person name="Han B."/>
        </authorList>
    </citation>
    <scope>NUCLEOTIDE SEQUENCE [LARGE SCALE GENOMIC DNA]</scope>
    <source>
        <strain>cv. Guang-Lu-Ai No.4</strain>
    </source>
</reference>
<reference key="2">
    <citation type="journal article" date="2005" name="PLoS Biol.">
        <title>The genomes of Oryza sativa: a history of duplications.</title>
        <authorList>
            <person name="Yu J."/>
            <person name="Wang J."/>
            <person name="Lin W."/>
            <person name="Li S."/>
            <person name="Li H."/>
            <person name="Zhou J."/>
            <person name="Ni P."/>
            <person name="Dong W."/>
            <person name="Hu S."/>
            <person name="Zeng C."/>
            <person name="Zhang J."/>
            <person name="Zhang Y."/>
            <person name="Li R."/>
            <person name="Xu Z."/>
            <person name="Li S."/>
            <person name="Li X."/>
            <person name="Zheng H."/>
            <person name="Cong L."/>
            <person name="Lin L."/>
            <person name="Yin J."/>
            <person name="Geng J."/>
            <person name="Li G."/>
            <person name="Shi J."/>
            <person name="Liu J."/>
            <person name="Lv H."/>
            <person name="Li J."/>
            <person name="Wang J."/>
            <person name="Deng Y."/>
            <person name="Ran L."/>
            <person name="Shi X."/>
            <person name="Wang X."/>
            <person name="Wu Q."/>
            <person name="Li C."/>
            <person name="Ren X."/>
            <person name="Wang J."/>
            <person name="Wang X."/>
            <person name="Li D."/>
            <person name="Liu D."/>
            <person name="Zhang X."/>
            <person name="Ji Z."/>
            <person name="Zhao W."/>
            <person name="Sun Y."/>
            <person name="Zhang Z."/>
            <person name="Bao J."/>
            <person name="Han Y."/>
            <person name="Dong L."/>
            <person name="Ji J."/>
            <person name="Chen P."/>
            <person name="Wu S."/>
            <person name="Liu J."/>
            <person name="Xiao Y."/>
            <person name="Bu D."/>
            <person name="Tan J."/>
            <person name="Yang L."/>
            <person name="Ye C."/>
            <person name="Zhang J."/>
            <person name="Xu J."/>
            <person name="Zhou Y."/>
            <person name="Yu Y."/>
            <person name="Zhang B."/>
            <person name="Zhuang S."/>
            <person name="Wei H."/>
            <person name="Liu B."/>
            <person name="Lei M."/>
            <person name="Yu H."/>
            <person name="Li Y."/>
            <person name="Xu H."/>
            <person name="Wei S."/>
            <person name="He X."/>
            <person name="Fang L."/>
            <person name="Zhang Z."/>
            <person name="Zhang Y."/>
            <person name="Huang X."/>
            <person name="Su Z."/>
            <person name="Tong W."/>
            <person name="Li J."/>
            <person name="Tong Z."/>
            <person name="Li S."/>
            <person name="Ye J."/>
            <person name="Wang L."/>
            <person name="Fang L."/>
            <person name="Lei T."/>
            <person name="Chen C.-S."/>
            <person name="Chen H.-C."/>
            <person name="Xu Z."/>
            <person name="Li H."/>
            <person name="Huang H."/>
            <person name="Zhang F."/>
            <person name="Xu H."/>
            <person name="Li N."/>
            <person name="Zhao C."/>
            <person name="Li S."/>
            <person name="Dong L."/>
            <person name="Huang Y."/>
            <person name="Li L."/>
            <person name="Xi Y."/>
            <person name="Qi Q."/>
            <person name="Li W."/>
            <person name="Zhang B."/>
            <person name="Hu W."/>
            <person name="Zhang Y."/>
            <person name="Tian X."/>
            <person name="Jiao Y."/>
            <person name="Liang X."/>
            <person name="Jin J."/>
            <person name="Gao L."/>
            <person name="Zheng W."/>
            <person name="Hao B."/>
            <person name="Liu S.-M."/>
            <person name="Wang W."/>
            <person name="Yuan L."/>
            <person name="Cao M."/>
            <person name="McDermott J."/>
            <person name="Samudrala R."/>
            <person name="Wang J."/>
            <person name="Wong G.K.-S."/>
            <person name="Yang H."/>
        </authorList>
    </citation>
    <scope>NUCLEOTIDE SEQUENCE [LARGE SCALE GENOMIC DNA]</scope>
    <source>
        <strain>cv. 93-11</strain>
    </source>
</reference>